<reference key="1">
    <citation type="journal article" date="2006" name="Development">
        <title>The transcription factor ZBP-89 controls generation of the hematopoietic lineage in zebrafish and mouse embryonic stem cells.</title>
        <authorList>
            <person name="Li X."/>
            <person name="Xiong J.-W."/>
            <person name="Shelley C.S."/>
            <person name="Park H."/>
            <person name="Arnaout M.A."/>
        </authorList>
    </citation>
    <scope>NUCLEOTIDE SEQUENCE [MRNA]</scope>
    <scope>FUNCTION</scope>
    <scope>DEVELOPMENTAL STAGE</scope>
    <source>
        <tissue>Embryo</tissue>
    </source>
</reference>
<reference key="2">
    <citation type="journal article" date="2013" name="Nature">
        <title>The zebrafish reference genome sequence and its relationship to the human genome.</title>
        <authorList>
            <person name="Howe K."/>
            <person name="Clark M.D."/>
            <person name="Torroja C.F."/>
            <person name="Torrance J."/>
            <person name="Berthelot C."/>
            <person name="Muffato M."/>
            <person name="Collins J.E."/>
            <person name="Humphray S."/>
            <person name="McLaren K."/>
            <person name="Matthews L."/>
            <person name="McLaren S."/>
            <person name="Sealy I."/>
            <person name="Caccamo M."/>
            <person name="Churcher C."/>
            <person name="Scott C."/>
            <person name="Barrett J.C."/>
            <person name="Koch R."/>
            <person name="Rauch G.J."/>
            <person name="White S."/>
            <person name="Chow W."/>
            <person name="Kilian B."/>
            <person name="Quintais L.T."/>
            <person name="Guerra-Assuncao J.A."/>
            <person name="Zhou Y."/>
            <person name="Gu Y."/>
            <person name="Yen J."/>
            <person name="Vogel J.H."/>
            <person name="Eyre T."/>
            <person name="Redmond S."/>
            <person name="Banerjee R."/>
            <person name="Chi J."/>
            <person name="Fu B."/>
            <person name="Langley E."/>
            <person name="Maguire S.F."/>
            <person name="Laird G.K."/>
            <person name="Lloyd D."/>
            <person name="Kenyon E."/>
            <person name="Donaldson S."/>
            <person name="Sehra H."/>
            <person name="Almeida-King J."/>
            <person name="Loveland J."/>
            <person name="Trevanion S."/>
            <person name="Jones M."/>
            <person name="Quail M."/>
            <person name="Willey D."/>
            <person name="Hunt A."/>
            <person name="Burton J."/>
            <person name="Sims S."/>
            <person name="McLay K."/>
            <person name="Plumb B."/>
            <person name="Davis J."/>
            <person name="Clee C."/>
            <person name="Oliver K."/>
            <person name="Clark R."/>
            <person name="Riddle C."/>
            <person name="Elliot D."/>
            <person name="Threadgold G."/>
            <person name="Harden G."/>
            <person name="Ware D."/>
            <person name="Begum S."/>
            <person name="Mortimore B."/>
            <person name="Kerry G."/>
            <person name="Heath P."/>
            <person name="Phillimore B."/>
            <person name="Tracey A."/>
            <person name="Corby N."/>
            <person name="Dunn M."/>
            <person name="Johnson C."/>
            <person name="Wood J."/>
            <person name="Clark S."/>
            <person name="Pelan S."/>
            <person name="Griffiths G."/>
            <person name="Smith M."/>
            <person name="Glithero R."/>
            <person name="Howden P."/>
            <person name="Barker N."/>
            <person name="Lloyd C."/>
            <person name="Stevens C."/>
            <person name="Harley J."/>
            <person name="Holt K."/>
            <person name="Panagiotidis G."/>
            <person name="Lovell J."/>
            <person name="Beasley H."/>
            <person name="Henderson C."/>
            <person name="Gordon D."/>
            <person name="Auger K."/>
            <person name="Wright D."/>
            <person name="Collins J."/>
            <person name="Raisen C."/>
            <person name="Dyer L."/>
            <person name="Leung K."/>
            <person name="Robertson L."/>
            <person name="Ambridge K."/>
            <person name="Leongamornlert D."/>
            <person name="McGuire S."/>
            <person name="Gilderthorp R."/>
            <person name="Griffiths C."/>
            <person name="Manthravadi D."/>
            <person name="Nichol S."/>
            <person name="Barker G."/>
            <person name="Whitehead S."/>
            <person name="Kay M."/>
            <person name="Brown J."/>
            <person name="Murnane C."/>
            <person name="Gray E."/>
            <person name="Humphries M."/>
            <person name="Sycamore N."/>
            <person name="Barker D."/>
            <person name="Saunders D."/>
            <person name="Wallis J."/>
            <person name="Babbage A."/>
            <person name="Hammond S."/>
            <person name="Mashreghi-Mohammadi M."/>
            <person name="Barr L."/>
            <person name="Martin S."/>
            <person name="Wray P."/>
            <person name="Ellington A."/>
            <person name="Matthews N."/>
            <person name="Ellwood M."/>
            <person name="Woodmansey R."/>
            <person name="Clark G."/>
            <person name="Cooper J."/>
            <person name="Tromans A."/>
            <person name="Grafham D."/>
            <person name="Skuce C."/>
            <person name="Pandian R."/>
            <person name="Andrews R."/>
            <person name="Harrison E."/>
            <person name="Kimberley A."/>
            <person name="Garnett J."/>
            <person name="Fosker N."/>
            <person name="Hall R."/>
            <person name="Garner P."/>
            <person name="Kelly D."/>
            <person name="Bird C."/>
            <person name="Palmer S."/>
            <person name="Gehring I."/>
            <person name="Berger A."/>
            <person name="Dooley C.M."/>
            <person name="Ersan-Urun Z."/>
            <person name="Eser C."/>
            <person name="Geiger H."/>
            <person name="Geisler M."/>
            <person name="Karotki L."/>
            <person name="Kirn A."/>
            <person name="Konantz J."/>
            <person name="Konantz M."/>
            <person name="Oberlander M."/>
            <person name="Rudolph-Geiger S."/>
            <person name="Teucke M."/>
            <person name="Lanz C."/>
            <person name="Raddatz G."/>
            <person name="Osoegawa K."/>
            <person name="Zhu B."/>
            <person name="Rapp A."/>
            <person name="Widaa S."/>
            <person name="Langford C."/>
            <person name="Yang F."/>
            <person name="Schuster S.C."/>
            <person name="Carter N.P."/>
            <person name="Harrow J."/>
            <person name="Ning Z."/>
            <person name="Herrero J."/>
            <person name="Searle S.M."/>
            <person name="Enright A."/>
            <person name="Geisler R."/>
            <person name="Plasterk R.H."/>
            <person name="Lee C."/>
            <person name="Westerfield M."/>
            <person name="de Jong P.J."/>
            <person name="Zon L.I."/>
            <person name="Postlethwait J.H."/>
            <person name="Nusslein-Volhard C."/>
            <person name="Hubbard T.J."/>
            <person name="Roest Crollius H."/>
            <person name="Rogers J."/>
            <person name="Stemple D.L."/>
        </authorList>
    </citation>
    <scope>NUCLEOTIDE SEQUENCE [LARGE SCALE GENOMIC DNA]</scope>
    <source>
        <strain>Tuebingen</strain>
    </source>
</reference>
<reference key="3">
    <citation type="submission" date="2008-04" db="EMBL/GenBank/DDBJ databases">
        <authorList>
            <consortium name="NIH - Zebrafish Gene Collection (ZGC) project"/>
        </authorList>
    </citation>
    <scope>NUCLEOTIDE SEQUENCE [LARGE SCALE MRNA]</scope>
</reference>
<keyword id="KW-0238">DNA-binding</keyword>
<keyword id="KW-0479">Metal-binding</keyword>
<keyword id="KW-0539">Nucleus</keyword>
<keyword id="KW-1185">Reference proteome</keyword>
<keyword id="KW-0677">Repeat</keyword>
<keyword id="KW-0678">Repressor</keyword>
<keyword id="KW-0804">Transcription</keyword>
<keyword id="KW-0805">Transcription regulation</keyword>
<keyword id="KW-0862">Zinc</keyword>
<keyword id="KW-0863">Zinc-finger</keyword>
<organism>
    <name type="scientific">Danio rerio</name>
    <name type="common">Zebrafish</name>
    <name type="synonym">Brachydanio rerio</name>
    <dbReference type="NCBI Taxonomy" id="7955"/>
    <lineage>
        <taxon>Eukaryota</taxon>
        <taxon>Metazoa</taxon>
        <taxon>Chordata</taxon>
        <taxon>Craniata</taxon>
        <taxon>Vertebrata</taxon>
        <taxon>Euteleostomi</taxon>
        <taxon>Actinopterygii</taxon>
        <taxon>Neopterygii</taxon>
        <taxon>Teleostei</taxon>
        <taxon>Ostariophysi</taxon>
        <taxon>Cypriniformes</taxon>
        <taxon>Danionidae</taxon>
        <taxon>Danioninae</taxon>
        <taxon>Danio</taxon>
    </lineage>
</organism>
<feature type="chain" id="PRO_0000354690" description="Zinc finger protein 148">
    <location>
        <begin position="1"/>
        <end position="808"/>
    </location>
</feature>
<feature type="zinc finger region" description="C2H2-type 1" evidence="2">
    <location>
        <begin position="180"/>
        <end position="202"/>
    </location>
</feature>
<feature type="zinc finger region" description="C2H2-type 2" evidence="2">
    <location>
        <begin position="208"/>
        <end position="230"/>
    </location>
</feature>
<feature type="zinc finger region" description="C2H2-type 3" evidence="2">
    <location>
        <begin position="236"/>
        <end position="258"/>
    </location>
</feature>
<feature type="zinc finger region" description="C2H2-type 4" evidence="2">
    <location>
        <begin position="264"/>
        <end position="287"/>
    </location>
</feature>
<feature type="region of interest" description="Disordered" evidence="3">
    <location>
        <begin position="15"/>
        <end position="86"/>
    </location>
</feature>
<feature type="region of interest" description="Disordered" evidence="3">
    <location>
        <begin position="131"/>
        <end position="162"/>
    </location>
</feature>
<feature type="region of interest" description="Disordered" evidence="3">
    <location>
        <begin position="305"/>
        <end position="338"/>
    </location>
</feature>
<feature type="region of interest" description="Disordered" evidence="3">
    <location>
        <begin position="596"/>
        <end position="617"/>
    </location>
</feature>
<feature type="region of interest" description="Disordered" evidence="3">
    <location>
        <begin position="705"/>
        <end position="736"/>
    </location>
</feature>
<feature type="compositionally biased region" description="Acidic residues" evidence="3">
    <location>
        <begin position="56"/>
        <end position="73"/>
    </location>
</feature>
<feature type="compositionally biased region" description="Basic residues" evidence="3">
    <location>
        <begin position="150"/>
        <end position="159"/>
    </location>
</feature>
<feature type="compositionally biased region" description="Polar residues" evidence="3">
    <location>
        <begin position="705"/>
        <end position="718"/>
    </location>
</feature>
<feature type="compositionally biased region" description="Polar residues" evidence="3">
    <location>
        <begin position="725"/>
        <end position="736"/>
    </location>
</feature>
<feature type="sequence conflict" description="In Ref. 3; AAI63289." evidence="5" ref="3">
    <original>E</original>
    <variation>DD</variation>
    <location>
        <position position="66"/>
    </location>
</feature>
<feature type="sequence conflict" description="In Ref. 1; ABK40532." evidence="5" ref="1">
    <original>K</original>
    <variation>T</variation>
    <location>
        <position position="325"/>
    </location>
</feature>
<feature type="sequence conflict" description="In Ref. 3; AAI63289." evidence="5" ref="3">
    <original>Q</original>
    <variation>E</variation>
    <location>
        <position position="429"/>
    </location>
</feature>
<comment type="function">
    <text evidence="4">Involved in transcriptional regulation. Represses the transcription of a number of genes. Required for primitive and definitive hematopoiesis during embryonic development.</text>
</comment>
<comment type="subcellular location">
    <subcellularLocation>
        <location evidence="1">Nucleus</location>
    </subcellularLocation>
</comment>
<comment type="developmental stage">
    <text evidence="4">Detected in posterior lateral mesoderm, head mesenchyme and the intermediate cell mass in embryos 24 hours after fertilization.</text>
</comment>
<comment type="miscellaneous">
    <text>Knock-down of the znf148 mRNA disrupts both primitive and definitive hematopoiesis, but does not affect primary blood vessel formation. Most embryos die before four days after fertilization.</text>
</comment>
<comment type="similarity">
    <text evidence="5">Belongs to the krueppel C2H2-type zinc-finger protein family.</text>
</comment>
<evidence type="ECO:0000250" key="1"/>
<evidence type="ECO:0000255" key="2">
    <source>
        <dbReference type="PROSITE-ProRule" id="PRU00042"/>
    </source>
</evidence>
<evidence type="ECO:0000256" key="3">
    <source>
        <dbReference type="SAM" id="MobiDB-lite"/>
    </source>
</evidence>
<evidence type="ECO:0000269" key="4">
    <source>
    </source>
</evidence>
<evidence type="ECO:0000305" key="5"/>
<gene>
    <name type="primary">znf148</name>
    <name type="synonym">zbp89</name>
    <name type="ORF">si:dkey-101k6.6</name>
</gene>
<sequence>MNIDDKLEGMLLKYSPVGLQHPSRGLGPSRVDGRGRRGSLDMTLGERSLANHPLLAEDDDDEDEEEDDDDDLAGEGLTSHDLISQDDLMVHEETVKNDGQDEAAFSHRISNKLHYTLSMPVNIKQEMKVPDSLILNKKEKKPGRDPSDCHKKKKRKQRSPAKILTINEDGSLGHQNPKSHICEHCNAAFRTNYHLQRHVFIHTGEKPFQCNQCDMRFIQKYLLQRHEKIHTGEKPFRCDECGMKFIQKYHMERHKRTHSGEKPYQCDYCHQFFSRTDRVLKHRRMCHENKDRKVQKTAVKDSPLRTPENLGFSFPAKDCTLPKKKRQKTSDKSRASITNPAVDKVVEADMDEKTEDRLAKSECLPLYAVATKVKDEYVVTDYSVELPDSPPGSRHLAGEESNDEIISPPKLVLKKIASRRGFKQQALEQSQSLSPLSSFEESKVTRYTFEIVDNKGLLDVETNPDMESVEALQVGQAKPTGSSTNYDDAMQFVKKRRYLQAATANTSRDYALNVSSIVSQSSVTQASVATVIDETVPATILSETQTLNVEIKSSNEKNVLPDEVLQTLLDHYSNKANGQAEISFSVADTEVTSSISINSSDESSPAEALVTSSQAPPTEKASLLQEYSKFLQQALERTSQNDTYLNNQSLTFVNDSASLAGQPLFSTEKQFTSPPRFRPTMNSPLRSTLEKPNFNLLVDTQHSFSFSGDETNPSSVSPTEDFLDQVTSPKKTDPQSISQTFQITTFDQNFRSQFPSSRSGISPQFSIASGQVTLRGHGGADFPEFSLVNETRTQLTSSPDATSSQTFG</sequence>
<accession>A0MS83</accession>
<accession>B0S5L9</accession>
<accession>B3DIY1</accession>
<dbReference type="EMBL" id="EF032416">
    <property type="protein sequence ID" value="ABK40532.1"/>
    <property type="molecule type" value="mRNA"/>
</dbReference>
<dbReference type="EMBL" id="BX255930">
    <property type="protein sequence ID" value="CAQ14829.1"/>
    <property type="molecule type" value="Genomic_DNA"/>
</dbReference>
<dbReference type="EMBL" id="BC163289">
    <property type="protein sequence ID" value="AAI63289.1"/>
    <property type="molecule type" value="mRNA"/>
</dbReference>
<dbReference type="RefSeq" id="NP_001073649.2">
    <property type="nucleotide sequence ID" value="NM_001080180.2"/>
</dbReference>
<dbReference type="RefSeq" id="XP_068079501.1">
    <property type="nucleotide sequence ID" value="XM_068223400.1"/>
</dbReference>
<dbReference type="SMR" id="A0MS83"/>
<dbReference type="FunCoup" id="A0MS83">
    <property type="interactions" value="1860"/>
</dbReference>
<dbReference type="STRING" id="7955.ENSDARP00000071856"/>
<dbReference type="PaxDb" id="7955-ENSDARP00000071856"/>
<dbReference type="Ensembl" id="ENSDART00000077389">
    <property type="protein sequence ID" value="ENSDARP00000071856"/>
    <property type="gene ID" value="ENSDARG00000055106"/>
</dbReference>
<dbReference type="Ensembl" id="ENSDART00000184890">
    <property type="protein sequence ID" value="ENSDARP00000155940"/>
    <property type="gene ID" value="ENSDARG00000055106"/>
</dbReference>
<dbReference type="GeneID" id="560300"/>
<dbReference type="KEGG" id="dre:560300"/>
<dbReference type="AGR" id="ZFIN:ZDB-GENE-030131-8769"/>
<dbReference type="CTD" id="7707"/>
<dbReference type="ZFIN" id="ZDB-GENE-030131-8769">
    <property type="gene designation" value="znf148"/>
</dbReference>
<dbReference type="eggNOG" id="KOG1721">
    <property type="taxonomic scope" value="Eukaryota"/>
</dbReference>
<dbReference type="HOGENOM" id="CLU_025987_1_0_1"/>
<dbReference type="InParanoid" id="A0MS83"/>
<dbReference type="OMA" id="QPMNTEI"/>
<dbReference type="OrthoDB" id="8117402at2759"/>
<dbReference type="PhylomeDB" id="A0MS83"/>
<dbReference type="TreeFam" id="TF331779"/>
<dbReference type="PRO" id="PR:A0MS83"/>
<dbReference type="Proteomes" id="UP000000437">
    <property type="component" value="Chromosome 9"/>
</dbReference>
<dbReference type="Bgee" id="ENSDARG00000055106">
    <property type="expression patterns" value="Expressed in caudal fin and 24 other cell types or tissues"/>
</dbReference>
<dbReference type="ExpressionAtlas" id="A0MS83">
    <property type="expression patterns" value="baseline and differential"/>
</dbReference>
<dbReference type="GO" id="GO:0005634">
    <property type="term" value="C:nucleus"/>
    <property type="evidence" value="ECO:0007669"/>
    <property type="project" value="UniProtKB-SubCell"/>
</dbReference>
<dbReference type="GO" id="GO:0003700">
    <property type="term" value="F:DNA-binding transcription factor activity"/>
    <property type="evidence" value="ECO:0000318"/>
    <property type="project" value="GO_Central"/>
</dbReference>
<dbReference type="GO" id="GO:0000978">
    <property type="term" value="F:RNA polymerase II cis-regulatory region sequence-specific DNA binding"/>
    <property type="evidence" value="ECO:0000318"/>
    <property type="project" value="GO_Central"/>
</dbReference>
<dbReference type="GO" id="GO:0008270">
    <property type="term" value="F:zinc ion binding"/>
    <property type="evidence" value="ECO:0007669"/>
    <property type="project" value="UniProtKB-KW"/>
</dbReference>
<dbReference type="GO" id="GO:0030097">
    <property type="term" value="P:hemopoiesis"/>
    <property type="evidence" value="ECO:0000315"/>
    <property type="project" value="ZFIN"/>
</dbReference>
<dbReference type="GO" id="GO:0006357">
    <property type="term" value="P:regulation of transcription by RNA polymerase II"/>
    <property type="evidence" value="ECO:0000318"/>
    <property type="project" value="GO_Central"/>
</dbReference>
<dbReference type="FunFam" id="3.30.160.60:FF:000067">
    <property type="entry name" value="Vascular endothelial zinc finger 1"/>
    <property type="match status" value="1"/>
</dbReference>
<dbReference type="FunFam" id="3.30.160.60:FF:000042">
    <property type="entry name" value="Zinc finger protein 148"/>
    <property type="match status" value="2"/>
</dbReference>
<dbReference type="Gene3D" id="3.30.160.60">
    <property type="entry name" value="Classic Zinc Finger"/>
    <property type="match status" value="4"/>
</dbReference>
<dbReference type="InterPro" id="IPR036236">
    <property type="entry name" value="Znf_C2H2_sf"/>
</dbReference>
<dbReference type="InterPro" id="IPR013087">
    <property type="entry name" value="Znf_C2H2_type"/>
</dbReference>
<dbReference type="PANTHER" id="PTHR23235:SF155">
    <property type="entry name" value="EARLY GROWTH RESPONSE 4-RELATED"/>
    <property type="match status" value="1"/>
</dbReference>
<dbReference type="PANTHER" id="PTHR23235">
    <property type="entry name" value="KRUEPPEL-LIKE TRANSCRIPTION FACTOR"/>
    <property type="match status" value="1"/>
</dbReference>
<dbReference type="Pfam" id="PF00096">
    <property type="entry name" value="zf-C2H2"/>
    <property type="match status" value="3"/>
</dbReference>
<dbReference type="SMART" id="SM00355">
    <property type="entry name" value="ZnF_C2H2"/>
    <property type="match status" value="4"/>
</dbReference>
<dbReference type="SUPFAM" id="SSF57667">
    <property type="entry name" value="beta-beta-alpha zinc fingers"/>
    <property type="match status" value="2"/>
</dbReference>
<dbReference type="PROSITE" id="PS00028">
    <property type="entry name" value="ZINC_FINGER_C2H2_1"/>
    <property type="match status" value="4"/>
</dbReference>
<dbReference type="PROSITE" id="PS50157">
    <property type="entry name" value="ZINC_FINGER_C2H2_2"/>
    <property type="match status" value="4"/>
</dbReference>
<proteinExistence type="evidence at transcript level"/>
<protein>
    <recommendedName>
        <fullName>Zinc finger protein 148</fullName>
    </recommendedName>
    <alternativeName>
        <fullName>Transcription factor ZBP-89</fullName>
    </alternativeName>
    <alternativeName>
        <fullName>Zinc finger DNA-binding protein 89</fullName>
    </alternativeName>
</protein>
<name>ZN148_DANRE</name>